<sequence>MDMDPPTNNPSPPGPPDSPPPEKRLASLSLRTSHLPPDFEIHDDYDDDDDEGYLTAVSRVGSISTSASAWKDDLEDADVAPPSPSSSGYAAERGTSLASSAAANDDPQPQPDDDDWPRDKKHLHEDDTSASWRKRKKHFFILSNSGKPIYSRYGDEHKLAGFSATLQAIISFVENSGDHIKFVRAAKHQIVFLVKGPIYLVCISCTEESYEGLRGQLELMYGQMLLILTKSVNRCFEKNPKFDMAPLLGGTDAVFLSLIHAFSWNPATFLHAYTCLPLAQSTRQAASAVLQDIADSGVLFALLMCEHKVISLVGAQKATLHPDDIFLLSNFILSSESFRTSESFSPICLPRYNSMAFLYAYVHFFDENTYLTLLTARSDAFYDLKDSRSRIQNVLLKANVLVEVQRSLRESALRIEDLPADPSSQSVSPPPQFSQDLHFQLLSSEMAIGGPAGLWHFIYKSIYLDQYVSSEFPLIISNPKQQKRLYKAYQKLYASMHDKATGPHKTQFRRDEDYVLFCWITQDFELYAAFNPLADKSQAIKVCNRVCQWIRDLENEIFVYGESTLSW</sequence>
<evidence type="ECO:0000250" key="1">
    <source>
        <dbReference type="UniProtKB" id="Q9SKN1"/>
    </source>
</evidence>
<evidence type="ECO:0000256" key="2">
    <source>
        <dbReference type="SAM" id="MobiDB-lite"/>
    </source>
</evidence>
<evidence type="ECO:0000305" key="3"/>
<evidence type="ECO:0000312" key="4">
    <source>
        <dbReference type="EMBL" id="BAD87032.1"/>
    </source>
</evidence>
<evidence type="ECO:0000312" key="5">
    <source>
        <dbReference type="EMBL" id="BAD87849.1"/>
    </source>
</evidence>
<evidence type="ECO:0000312" key="6">
    <source>
        <dbReference type="EMBL" id="BAF07477.2"/>
    </source>
</evidence>
<reference key="1">
    <citation type="journal article" date="2002" name="Nature">
        <title>The genome sequence and structure of rice chromosome 1.</title>
        <authorList>
            <person name="Sasaki T."/>
            <person name="Matsumoto T."/>
            <person name="Yamamoto K."/>
            <person name="Sakata K."/>
            <person name="Baba T."/>
            <person name="Katayose Y."/>
            <person name="Wu J."/>
            <person name="Niimura Y."/>
            <person name="Cheng Z."/>
            <person name="Nagamura Y."/>
            <person name="Antonio B.A."/>
            <person name="Kanamori H."/>
            <person name="Hosokawa S."/>
            <person name="Masukawa M."/>
            <person name="Arikawa K."/>
            <person name="Chiden Y."/>
            <person name="Hayashi M."/>
            <person name="Okamoto M."/>
            <person name="Ando T."/>
            <person name="Aoki H."/>
            <person name="Arita K."/>
            <person name="Hamada M."/>
            <person name="Harada C."/>
            <person name="Hijishita S."/>
            <person name="Honda M."/>
            <person name="Ichikawa Y."/>
            <person name="Idonuma A."/>
            <person name="Iijima M."/>
            <person name="Ikeda M."/>
            <person name="Ikeno M."/>
            <person name="Ito S."/>
            <person name="Ito T."/>
            <person name="Ito Y."/>
            <person name="Ito Y."/>
            <person name="Iwabuchi A."/>
            <person name="Kamiya K."/>
            <person name="Karasawa W."/>
            <person name="Katagiri S."/>
            <person name="Kikuta A."/>
            <person name="Kobayashi N."/>
            <person name="Kono I."/>
            <person name="Machita K."/>
            <person name="Maehara T."/>
            <person name="Mizuno H."/>
            <person name="Mizubayashi T."/>
            <person name="Mukai Y."/>
            <person name="Nagasaki H."/>
            <person name="Nakashima M."/>
            <person name="Nakama Y."/>
            <person name="Nakamichi Y."/>
            <person name="Nakamura M."/>
            <person name="Namiki N."/>
            <person name="Negishi M."/>
            <person name="Ohta I."/>
            <person name="Ono N."/>
            <person name="Saji S."/>
            <person name="Sakai K."/>
            <person name="Shibata M."/>
            <person name="Shimokawa T."/>
            <person name="Shomura A."/>
            <person name="Song J."/>
            <person name="Takazaki Y."/>
            <person name="Terasawa K."/>
            <person name="Tsuji K."/>
            <person name="Waki K."/>
            <person name="Yamagata H."/>
            <person name="Yamane H."/>
            <person name="Yoshiki S."/>
            <person name="Yoshihara R."/>
            <person name="Yukawa K."/>
            <person name="Zhong H."/>
            <person name="Iwama H."/>
            <person name="Endo T."/>
            <person name="Ito H."/>
            <person name="Hahn J.H."/>
            <person name="Kim H.-I."/>
            <person name="Eun M.-Y."/>
            <person name="Yano M."/>
            <person name="Jiang J."/>
            <person name="Gojobori T."/>
        </authorList>
    </citation>
    <scope>NUCLEOTIDE SEQUENCE [LARGE SCALE GENOMIC DNA]</scope>
    <source>
        <strain>cv. Nipponbare</strain>
    </source>
</reference>
<reference key="2">
    <citation type="journal article" date="2005" name="Nature">
        <title>The map-based sequence of the rice genome.</title>
        <authorList>
            <consortium name="International rice genome sequencing project (IRGSP)"/>
        </authorList>
    </citation>
    <scope>NUCLEOTIDE SEQUENCE [LARGE SCALE GENOMIC DNA]</scope>
    <source>
        <strain>cv. Nipponbare</strain>
    </source>
</reference>
<reference key="3">
    <citation type="journal article" date="2008" name="Nucleic Acids Res.">
        <title>The rice annotation project database (RAP-DB): 2008 update.</title>
        <authorList>
            <consortium name="The rice annotation project (RAP)"/>
        </authorList>
    </citation>
    <scope>GENOME REANNOTATION</scope>
    <source>
        <strain>cv. Nipponbare</strain>
    </source>
</reference>
<reference key="4">
    <citation type="journal article" date="2013" name="Rice">
        <title>Improvement of the Oryza sativa Nipponbare reference genome using next generation sequence and optical map data.</title>
        <authorList>
            <person name="Kawahara Y."/>
            <person name="de la Bastide M."/>
            <person name="Hamilton J.P."/>
            <person name="Kanamori H."/>
            <person name="McCombie W.R."/>
            <person name="Ouyang S."/>
            <person name="Schwartz D.C."/>
            <person name="Tanaka T."/>
            <person name="Wu J."/>
            <person name="Zhou S."/>
            <person name="Childs K.L."/>
            <person name="Davidson R.M."/>
            <person name="Lin H."/>
            <person name="Quesada-Ocampo L."/>
            <person name="Vaillancourt B."/>
            <person name="Sakai H."/>
            <person name="Lee S.S."/>
            <person name="Kim J."/>
            <person name="Numa H."/>
            <person name="Itoh T."/>
            <person name="Buell C.R."/>
            <person name="Matsumoto T."/>
        </authorList>
    </citation>
    <scope>GENOME REANNOTATION</scope>
    <source>
        <strain>cv. Nipponbare</strain>
    </source>
</reference>
<reference key="5">
    <citation type="journal article" date="2005" name="PLoS Biol.">
        <title>The genomes of Oryza sativa: a history of duplications.</title>
        <authorList>
            <person name="Yu J."/>
            <person name="Wang J."/>
            <person name="Lin W."/>
            <person name="Li S."/>
            <person name="Li H."/>
            <person name="Zhou J."/>
            <person name="Ni P."/>
            <person name="Dong W."/>
            <person name="Hu S."/>
            <person name="Zeng C."/>
            <person name="Zhang J."/>
            <person name="Zhang Y."/>
            <person name="Li R."/>
            <person name="Xu Z."/>
            <person name="Li S."/>
            <person name="Li X."/>
            <person name="Zheng H."/>
            <person name="Cong L."/>
            <person name="Lin L."/>
            <person name="Yin J."/>
            <person name="Geng J."/>
            <person name="Li G."/>
            <person name="Shi J."/>
            <person name="Liu J."/>
            <person name="Lv H."/>
            <person name="Li J."/>
            <person name="Wang J."/>
            <person name="Deng Y."/>
            <person name="Ran L."/>
            <person name="Shi X."/>
            <person name="Wang X."/>
            <person name="Wu Q."/>
            <person name="Li C."/>
            <person name="Ren X."/>
            <person name="Wang J."/>
            <person name="Wang X."/>
            <person name="Li D."/>
            <person name="Liu D."/>
            <person name="Zhang X."/>
            <person name="Ji Z."/>
            <person name="Zhao W."/>
            <person name="Sun Y."/>
            <person name="Zhang Z."/>
            <person name="Bao J."/>
            <person name="Han Y."/>
            <person name="Dong L."/>
            <person name="Ji J."/>
            <person name="Chen P."/>
            <person name="Wu S."/>
            <person name="Liu J."/>
            <person name="Xiao Y."/>
            <person name="Bu D."/>
            <person name="Tan J."/>
            <person name="Yang L."/>
            <person name="Ye C."/>
            <person name="Zhang J."/>
            <person name="Xu J."/>
            <person name="Zhou Y."/>
            <person name="Yu Y."/>
            <person name="Zhang B."/>
            <person name="Zhuang S."/>
            <person name="Wei H."/>
            <person name="Liu B."/>
            <person name="Lei M."/>
            <person name="Yu H."/>
            <person name="Li Y."/>
            <person name="Xu H."/>
            <person name="Wei S."/>
            <person name="He X."/>
            <person name="Fang L."/>
            <person name="Zhang Z."/>
            <person name="Zhang Y."/>
            <person name="Huang X."/>
            <person name="Su Z."/>
            <person name="Tong W."/>
            <person name="Li J."/>
            <person name="Tong Z."/>
            <person name="Li S."/>
            <person name="Ye J."/>
            <person name="Wang L."/>
            <person name="Fang L."/>
            <person name="Lei T."/>
            <person name="Chen C.-S."/>
            <person name="Chen H.-C."/>
            <person name="Xu Z."/>
            <person name="Li H."/>
            <person name="Huang H."/>
            <person name="Zhang F."/>
            <person name="Xu H."/>
            <person name="Li N."/>
            <person name="Zhao C."/>
            <person name="Li S."/>
            <person name="Dong L."/>
            <person name="Huang Y."/>
            <person name="Li L."/>
            <person name="Xi Y."/>
            <person name="Qi Q."/>
            <person name="Li W."/>
            <person name="Zhang B."/>
            <person name="Hu W."/>
            <person name="Zhang Y."/>
            <person name="Tian X."/>
            <person name="Jiao Y."/>
            <person name="Liang X."/>
            <person name="Jin J."/>
            <person name="Gao L."/>
            <person name="Zheng W."/>
            <person name="Hao B."/>
            <person name="Liu S.-M."/>
            <person name="Wang W."/>
            <person name="Yuan L."/>
            <person name="Cao M."/>
            <person name="McDermott J."/>
            <person name="Samudrala R."/>
            <person name="Wang J."/>
            <person name="Wong G.K.-S."/>
            <person name="Yang H."/>
        </authorList>
    </citation>
    <scope>NUCLEOTIDE SEQUENCE [LARGE SCALE GENOMIC DNA]</scope>
    <source>
        <strain>cv. Nipponbare</strain>
    </source>
</reference>
<keyword id="KW-0967">Endosome</keyword>
<keyword id="KW-0344">Guanine-nucleotide releasing factor</keyword>
<keyword id="KW-1185">Reference proteome</keyword>
<proteinExistence type="inferred from homology"/>
<name>MON1_ORYSJ</name>
<gene>
    <name evidence="3" type="primary">MON1</name>
    <name evidence="6" type="ordered locus">Os01g0976000</name>
    <name evidence="3" type="ordered locus">LOC_Os01g74460</name>
    <name evidence="4" type="ORF">P0020E09.1</name>
    <name evidence="5" type="ORF">P0459B04.31</name>
</gene>
<protein>
    <recommendedName>
        <fullName evidence="3">Vacuolar fusion protein MON1 homolog</fullName>
    </recommendedName>
</protein>
<accession>Q5JL08</accession>
<accession>B9EX08</accession>
<accession>Q0JFK1</accession>
<organism>
    <name type="scientific">Oryza sativa subsp. japonica</name>
    <name type="common">Rice</name>
    <dbReference type="NCBI Taxonomy" id="39947"/>
    <lineage>
        <taxon>Eukaryota</taxon>
        <taxon>Viridiplantae</taxon>
        <taxon>Streptophyta</taxon>
        <taxon>Embryophyta</taxon>
        <taxon>Tracheophyta</taxon>
        <taxon>Spermatophyta</taxon>
        <taxon>Magnoliopsida</taxon>
        <taxon>Liliopsida</taxon>
        <taxon>Poales</taxon>
        <taxon>Poaceae</taxon>
        <taxon>BOP clade</taxon>
        <taxon>Oryzoideae</taxon>
        <taxon>Oryzeae</taxon>
        <taxon>Oryzinae</taxon>
        <taxon>Oryza</taxon>
        <taxon>Oryza sativa</taxon>
    </lineage>
</organism>
<dbReference type="EMBL" id="AP003228">
    <property type="protein sequence ID" value="BAD87032.1"/>
    <property type="molecule type" value="Genomic_DNA"/>
</dbReference>
<dbReference type="EMBL" id="AP003627">
    <property type="protein sequence ID" value="BAD87849.1"/>
    <property type="molecule type" value="Genomic_DNA"/>
</dbReference>
<dbReference type="EMBL" id="AP008207">
    <property type="protein sequence ID" value="BAF07477.2"/>
    <property type="molecule type" value="Genomic_DNA"/>
</dbReference>
<dbReference type="EMBL" id="AP014957">
    <property type="protein sequence ID" value="BAS76467.1"/>
    <property type="molecule type" value="Genomic_DNA"/>
</dbReference>
<dbReference type="EMBL" id="CM000138">
    <property type="protein sequence ID" value="EEE56104.1"/>
    <property type="molecule type" value="Genomic_DNA"/>
</dbReference>
<dbReference type="RefSeq" id="XP_015641045.1">
    <property type="nucleotide sequence ID" value="XM_015785559.1"/>
</dbReference>
<dbReference type="SMR" id="Q5JL08"/>
<dbReference type="FunCoup" id="Q5JL08">
    <property type="interactions" value="3417"/>
</dbReference>
<dbReference type="STRING" id="39947.Q5JL08"/>
<dbReference type="PaxDb" id="39947-Q5JL08"/>
<dbReference type="EnsemblPlants" id="Os01t0976000-01">
    <property type="protein sequence ID" value="Os01t0976000-01"/>
    <property type="gene ID" value="Os01g0976000"/>
</dbReference>
<dbReference type="GeneID" id="4324304"/>
<dbReference type="Gramene" id="Os01t0976000-01">
    <property type="protein sequence ID" value="Os01t0976000-01"/>
    <property type="gene ID" value="Os01g0976000"/>
</dbReference>
<dbReference type="KEGG" id="dosa:Os01g0976000"/>
<dbReference type="eggNOG" id="KOG0997">
    <property type="taxonomic scope" value="Eukaryota"/>
</dbReference>
<dbReference type="HOGENOM" id="CLU_014574_3_1_1"/>
<dbReference type="InParanoid" id="Q5JL08"/>
<dbReference type="OMA" id="QQPFNAK"/>
<dbReference type="Proteomes" id="UP000000763">
    <property type="component" value="Chromosome 1"/>
</dbReference>
<dbReference type="Proteomes" id="UP000007752">
    <property type="component" value="Chromosome 1"/>
</dbReference>
<dbReference type="Proteomes" id="UP000059680">
    <property type="component" value="Chromosome 1"/>
</dbReference>
<dbReference type="GO" id="GO:0005768">
    <property type="term" value="C:endosome"/>
    <property type="evidence" value="ECO:0007669"/>
    <property type="project" value="UniProtKB-SubCell"/>
</dbReference>
<dbReference type="GO" id="GO:0005085">
    <property type="term" value="F:guanyl-nucleotide exchange factor activity"/>
    <property type="evidence" value="ECO:0007669"/>
    <property type="project" value="UniProtKB-KW"/>
</dbReference>
<dbReference type="GO" id="GO:0045324">
    <property type="term" value="P:late endosome to vacuole transport"/>
    <property type="evidence" value="ECO:0007669"/>
    <property type="project" value="EnsemblPlants"/>
</dbReference>
<dbReference type="GO" id="GO:0099402">
    <property type="term" value="P:plant organ development"/>
    <property type="evidence" value="ECO:0007669"/>
    <property type="project" value="EnsemblPlants"/>
</dbReference>
<dbReference type="GO" id="GO:0006623">
    <property type="term" value="P:protein targeting to vacuole"/>
    <property type="evidence" value="ECO:0007669"/>
    <property type="project" value="InterPro"/>
</dbReference>
<dbReference type="GO" id="GO:0007033">
    <property type="term" value="P:vacuole organization"/>
    <property type="evidence" value="ECO:0007669"/>
    <property type="project" value="EnsemblPlants"/>
</dbReference>
<dbReference type="InterPro" id="IPR043972">
    <property type="entry name" value="FUZ/MON1/HPS1_longin_1"/>
</dbReference>
<dbReference type="InterPro" id="IPR043971">
    <property type="entry name" value="FUZ/MON1/HPS1_longin_2"/>
</dbReference>
<dbReference type="InterPro" id="IPR043970">
    <property type="entry name" value="FUZ/MON1/HPS1_longin_3"/>
</dbReference>
<dbReference type="InterPro" id="IPR004353">
    <property type="entry name" value="Mon1"/>
</dbReference>
<dbReference type="PANTHER" id="PTHR13027">
    <property type="entry name" value="SAND PROTEIN-RELATED"/>
    <property type="match status" value="1"/>
</dbReference>
<dbReference type="PANTHER" id="PTHR13027:SF7">
    <property type="entry name" value="VACUOLAR FUSION PROTEIN MON1 HOMOLOG"/>
    <property type="match status" value="1"/>
</dbReference>
<dbReference type="Pfam" id="PF19036">
    <property type="entry name" value="Fuz_longin_1"/>
    <property type="match status" value="1"/>
</dbReference>
<dbReference type="Pfam" id="PF19037">
    <property type="entry name" value="Fuz_longin_2"/>
    <property type="match status" value="1"/>
</dbReference>
<dbReference type="Pfam" id="PF19038">
    <property type="entry name" value="Fuz_longin_3"/>
    <property type="match status" value="1"/>
</dbReference>
<dbReference type="PRINTS" id="PR01546">
    <property type="entry name" value="YEAST73DUF"/>
</dbReference>
<comment type="function">
    <text evidence="1">Plays an important role in membrane trafficking through the secretory apparatus. In complex with CCZ1, acts as a guanine exchange factor (GEF) for Rab7 protein family. Promotes the exchange of GDP to GTP, converting it from an inactive GDP-bound form into an active GTP-bound form. The active form is involved in protein trafficking from prevacuolar compartments (PVCs) to vacuoles. May serve as a linker between Rab5 and Rab7 protein families in PVCs and mediate PVC maturation.</text>
</comment>
<comment type="subunit">
    <text evidence="1">Interacts with CCZ1A, CCZ1B and RABF2B.</text>
</comment>
<comment type="subcellular location">
    <subcellularLocation>
        <location evidence="1">Endosome</location>
    </subcellularLocation>
    <subcellularLocation>
        <location evidence="1">Prevacuolar compartment</location>
    </subcellularLocation>
</comment>
<comment type="similarity">
    <text evidence="3">Belongs to the MON1/SAND family.</text>
</comment>
<feature type="chain" id="PRO_0000438480" description="Vacuolar fusion protein MON1 homolog">
    <location>
        <begin position="1"/>
        <end position="567"/>
    </location>
</feature>
<feature type="region of interest" description="Disordered" evidence="2">
    <location>
        <begin position="1"/>
        <end position="52"/>
    </location>
</feature>
<feature type="region of interest" description="Disordered" evidence="2">
    <location>
        <begin position="65"/>
        <end position="129"/>
    </location>
</feature>
<feature type="compositionally biased region" description="Pro residues" evidence="2">
    <location>
        <begin position="7"/>
        <end position="19"/>
    </location>
</feature>
<feature type="compositionally biased region" description="Acidic residues" evidence="2">
    <location>
        <begin position="43"/>
        <end position="52"/>
    </location>
</feature>
<feature type="sequence conflict" description="In Ref. 5; EEE56104." evidence="3" ref="5">
    <original>F</original>
    <variation>L</variation>
    <location>
        <position position="457"/>
    </location>
</feature>